<comment type="function">
    <text evidence="1">Single strand-specific metallo-endoribonuclease involved in late-stage 70S ribosome quality control and in maturation of the 3' terminus of the 16S rRNA.</text>
</comment>
<comment type="cofactor">
    <cofactor evidence="1">
        <name>Zn(2+)</name>
        <dbReference type="ChEBI" id="CHEBI:29105"/>
    </cofactor>
    <text evidence="1">Binds 1 zinc ion.</text>
</comment>
<comment type="subcellular location">
    <subcellularLocation>
        <location evidence="1">Cytoplasm</location>
    </subcellularLocation>
</comment>
<comment type="similarity">
    <text evidence="1">Belongs to the endoribonuclease YbeY family.</text>
</comment>
<proteinExistence type="inferred from homology"/>
<evidence type="ECO:0000255" key="1">
    <source>
        <dbReference type="HAMAP-Rule" id="MF_00009"/>
    </source>
</evidence>
<protein>
    <recommendedName>
        <fullName evidence="1">Endoribonuclease YbeY</fullName>
        <ecNumber evidence="1">3.1.-.-</ecNumber>
    </recommendedName>
</protein>
<name>YBEY_SHESW</name>
<reference key="1">
    <citation type="submission" date="2006-12" db="EMBL/GenBank/DDBJ databases">
        <title>Complete sequence of Shewanella sp. W3-18-1.</title>
        <authorList>
            <consortium name="US DOE Joint Genome Institute"/>
            <person name="Copeland A."/>
            <person name="Lucas S."/>
            <person name="Lapidus A."/>
            <person name="Barry K."/>
            <person name="Detter J.C."/>
            <person name="Glavina del Rio T."/>
            <person name="Hammon N."/>
            <person name="Israni S."/>
            <person name="Dalin E."/>
            <person name="Tice H."/>
            <person name="Pitluck S."/>
            <person name="Chain P."/>
            <person name="Malfatti S."/>
            <person name="Shin M."/>
            <person name="Vergez L."/>
            <person name="Schmutz J."/>
            <person name="Larimer F."/>
            <person name="Land M."/>
            <person name="Hauser L."/>
            <person name="Kyrpides N."/>
            <person name="Lykidis A."/>
            <person name="Tiedje J."/>
            <person name="Richardson P."/>
        </authorList>
    </citation>
    <scope>NUCLEOTIDE SEQUENCE [LARGE SCALE GENOMIC DNA]</scope>
    <source>
        <strain>W3-18-1</strain>
    </source>
</reference>
<gene>
    <name evidence="1" type="primary">ybeY</name>
    <name type="ordered locus">Sputw3181_1047</name>
</gene>
<sequence length="153" mass="17320">MSLELALDVQYATTSDWLPTEEQLMLWAKTAIGNGMDRAELTIRIVDSRESQMLNSTYRGKDKPTNVLSFPFEAPAEIELPLLGDLVICAAVVENEAREQNKTLEAHWAHMVVHGCLHLLGYDHIEDEEAEEMESLETQLIESLGFTNPYKEQ</sequence>
<accession>A1RGV2</accession>
<feature type="chain" id="PRO_0000284309" description="Endoribonuclease YbeY">
    <location>
        <begin position="1"/>
        <end position="153"/>
    </location>
</feature>
<feature type="binding site" evidence="1">
    <location>
        <position position="114"/>
    </location>
    <ligand>
        <name>Zn(2+)</name>
        <dbReference type="ChEBI" id="CHEBI:29105"/>
        <note>catalytic</note>
    </ligand>
</feature>
<feature type="binding site" evidence="1">
    <location>
        <position position="118"/>
    </location>
    <ligand>
        <name>Zn(2+)</name>
        <dbReference type="ChEBI" id="CHEBI:29105"/>
        <note>catalytic</note>
    </ligand>
</feature>
<feature type="binding site" evidence="1">
    <location>
        <position position="124"/>
    </location>
    <ligand>
        <name>Zn(2+)</name>
        <dbReference type="ChEBI" id="CHEBI:29105"/>
        <note>catalytic</note>
    </ligand>
</feature>
<keyword id="KW-0963">Cytoplasm</keyword>
<keyword id="KW-0255">Endonuclease</keyword>
<keyword id="KW-0378">Hydrolase</keyword>
<keyword id="KW-0479">Metal-binding</keyword>
<keyword id="KW-0540">Nuclease</keyword>
<keyword id="KW-0690">Ribosome biogenesis</keyword>
<keyword id="KW-0698">rRNA processing</keyword>
<keyword id="KW-0862">Zinc</keyword>
<organism>
    <name type="scientific">Shewanella sp. (strain W3-18-1)</name>
    <dbReference type="NCBI Taxonomy" id="351745"/>
    <lineage>
        <taxon>Bacteria</taxon>
        <taxon>Pseudomonadati</taxon>
        <taxon>Pseudomonadota</taxon>
        <taxon>Gammaproteobacteria</taxon>
        <taxon>Alteromonadales</taxon>
        <taxon>Shewanellaceae</taxon>
        <taxon>Shewanella</taxon>
    </lineage>
</organism>
<dbReference type="EC" id="3.1.-.-" evidence="1"/>
<dbReference type="EMBL" id="CP000503">
    <property type="protein sequence ID" value="ABM23897.1"/>
    <property type="molecule type" value="Genomic_DNA"/>
</dbReference>
<dbReference type="RefSeq" id="WP_011788422.1">
    <property type="nucleotide sequence ID" value="NC_008750.1"/>
</dbReference>
<dbReference type="SMR" id="A1RGV2"/>
<dbReference type="KEGG" id="shw:Sputw3181_1047"/>
<dbReference type="HOGENOM" id="CLU_106710_0_1_6"/>
<dbReference type="Proteomes" id="UP000002597">
    <property type="component" value="Chromosome"/>
</dbReference>
<dbReference type="GO" id="GO:0005737">
    <property type="term" value="C:cytoplasm"/>
    <property type="evidence" value="ECO:0007669"/>
    <property type="project" value="UniProtKB-SubCell"/>
</dbReference>
<dbReference type="GO" id="GO:0004222">
    <property type="term" value="F:metalloendopeptidase activity"/>
    <property type="evidence" value="ECO:0007669"/>
    <property type="project" value="InterPro"/>
</dbReference>
<dbReference type="GO" id="GO:0004521">
    <property type="term" value="F:RNA endonuclease activity"/>
    <property type="evidence" value="ECO:0007669"/>
    <property type="project" value="UniProtKB-UniRule"/>
</dbReference>
<dbReference type="GO" id="GO:0008270">
    <property type="term" value="F:zinc ion binding"/>
    <property type="evidence" value="ECO:0007669"/>
    <property type="project" value="UniProtKB-UniRule"/>
</dbReference>
<dbReference type="GO" id="GO:0006364">
    <property type="term" value="P:rRNA processing"/>
    <property type="evidence" value="ECO:0007669"/>
    <property type="project" value="UniProtKB-UniRule"/>
</dbReference>
<dbReference type="Gene3D" id="3.40.390.30">
    <property type="entry name" value="Metalloproteases ('zincins'), catalytic domain"/>
    <property type="match status" value="1"/>
</dbReference>
<dbReference type="HAMAP" id="MF_00009">
    <property type="entry name" value="Endoribonucl_YbeY"/>
    <property type="match status" value="1"/>
</dbReference>
<dbReference type="InterPro" id="IPR023091">
    <property type="entry name" value="MetalPrtase_cat_dom_sf_prd"/>
</dbReference>
<dbReference type="InterPro" id="IPR002036">
    <property type="entry name" value="YbeY"/>
</dbReference>
<dbReference type="InterPro" id="IPR020549">
    <property type="entry name" value="YbeY_CS"/>
</dbReference>
<dbReference type="NCBIfam" id="TIGR00043">
    <property type="entry name" value="rRNA maturation RNase YbeY"/>
    <property type="match status" value="1"/>
</dbReference>
<dbReference type="PANTHER" id="PTHR46986">
    <property type="entry name" value="ENDORIBONUCLEASE YBEY, CHLOROPLASTIC"/>
    <property type="match status" value="1"/>
</dbReference>
<dbReference type="PANTHER" id="PTHR46986:SF1">
    <property type="entry name" value="ENDORIBONUCLEASE YBEY, CHLOROPLASTIC"/>
    <property type="match status" value="1"/>
</dbReference>
<dbReference type="Pfam" id="PF02130">
    <property type="entry name" value="YbeY"/>
    <property type="match status" value="1"/>
</dbReference>
<dbReference type="SUPFAM" id="SSF55486">
    <property type="entry name" value="Metalloproteases ('zincins'), catalytic domain"/>
    <property type="match status" value="1"/>
</dbReference>
<dbReference type="PROSITE" id="PS01306">
    <property type="entry name" value="UPF0054"/>
    <property type="match status" value="1"/>
</dbReference>